<feature type="chain" id="PRO_0000266193" description="CTP synthase">
    <location>
        <begin position="1"/>
        <end position="542"/>
    </location>
</feature>
<feature type="domain" description="Glutamine amidotransferase type-1" evidence="1">
    <location>
        <begin position="291"/>
        <end position="541"/>
    </location>
</feature>
<feature type="region of interest" description="Amidoligase domain" evidence="1">
    <location>
        <begin position="1"/>
        <end position="265"/>
    </location>
</feature>
<feature type="active site" description="Nucleophile; for glutamine hydrolysis" evidence="1">
    <location>
        <position position="380"/>
    </location>
</feature>
<feature type="active site" evidence="1">
    <location>
        <position position="514"/>
    </location>
</feature>
<feature type="active site" evidence="1">
    <location>
        <position position="516"/>
    </location>
</feature>
<feature type="binding site" evidence="1">
    <location>
        <position position="13"/>
    </location>
    <ligand>
        <name>CTP</name>
        <dbReference type="ChEBI" id="CHEBI:37563"/>
        <note>allosteric inhibitor</note>
    </ligand>
</feature>
<feature type="binding site" evidence="1">
    <location>
        <position position="13"/>
    </location>
    <ligand>
        <name>UTP</name>
        <dbReference type="ChEBI" id="CHEBI:46398"/>
    </ligand>
</feature>
<feature type="binding site" evidence="1">
    <location>
        <begin position="14"/>
        <end position="19"/>
    </location>
    <ligand>
        <name>ATP</name>
        <dbReference type="ChEBI" id="CHEBI:30616"/>
    </ligand>
</feature>
<feature type="binding site" evidence="1">
    <location>
        <position position="71"/>
    </location>
    <ligand>
        <name>ATP</name>
        <dbReference type="ChEBI" id="CHEBI:30616"/>
    </ligand>
</feature>
<feature type="binding site" evidence="1">
    <location>
        <position position="71"/>
    </location>
    <ligand>
        <name>Mg(2+)</name>
        <dbReference type="ChEBI" id="CHEBI:18420"/>
    </ligand>
</feature>
<feature type="binding site" evidence="1">
    <location>
        <position position="139"/>
    </location>
    <ligand>
        <name>Mg(2+)</name>
        <dbReference type="ChEBI" id="CHEBI:18420"/>
    </ligand>
</feature>
<feature type="binding site" evidence="1">
    <location>
        <begin position="146"/>
        <end position="148"/>
    </location>
    <ligand>
        <name>CTP</name>
        <dbReference type="ChEBI" id="CHEBI:37563"/>
        <note>allosteric inhibitor</note>
    </ligand>
</feature>
<feature type="binding site" evidence="1">
    <location>
        <begin position="186"/>
        <end position="191"/>
    </location>
    <ligand>
        <name>CTP</name>
        <dbReference type="ChEBI" id="CHEBI:37563"/>
        <note>allosteric inhibitor</note>
    </ligand>
</feature>
<feature type="binding site" evidence="1">
    <location>
        <begin position="186"/>
        <end position="191"/>
    </location>
    <ligand>
        <name>UTP</name>
        <dbReference type="ChEBI" id="CHEBI:46398"/>
    </ligand>
</feature>
<feature type="binding site" evidence="1">
    <location>
        <position position="222"/>
    </location>
    <ligand>
        <name>CTP</name>
        <dbReference type="ChEBI" id="CHEBI:37563"/>
        <note>allosteric inhibitor</note>
    </ligand>
</feature>
<feature type="binding site" evidence="1">
    <location>
        <position position="222"/>
    </location>
    <ligand>
        <name>UTP</name>
        <dbReference type="ChEBI" id="CHEBI:46398"/>
    </ligand>
</feature>
<feature type="binding site" evidence="1">
    <location>
        <position position="353"/>
    </location>
    <ligand>
        <name>L-glutamine</name>
        <dbReference type="ChEBI" id="CHEBI:58359"/>
    </ligand>
</feature>
<feature type="binding site" evidence="1">
    <location>
        <begin position="381"/>
        <end position="384"/>
    </location>
    <ligand>
        <name>L-glutamine</name>
        <dbReference type="ChEBI" id="CHEBI:58359"/>
    </ligand>
</feature>
<feature type="binding site" evidence="1">
    <location>
        <position position="404"/>
    </location>
    <ligand>
        <name>L-glutamine</name>
        <dbReference type="ChEBI" id="CHEBI:58359"/>
    </ligand>
</feature>
<feature type="binding site" evidence="1">
    <location>
        <position position="469"/>
    </location>
    <ligand>
        <name>L-glutamine</name>
        <dbReference type="ChEBI" id="CHEBI:58359"/>
    </ligand>
</feature>
<proteinExistence type="inferred from homology"/>
<reference key="1">
    <citation type="journal article" date="2006" name="Proc. Natl. Acad. Sci. U.S.A.">
        <title>The partitioned Rhizobium etli genome: genetic and metabolic redundancy in seven interacting replicons.</title>
        <authorList>
            <person name="Gonzalez V."/>
            <person name="Santamaria R.I."/>
            <person name="Bustos P."/>
            <person name="Hernandez-Gonzalez I."/>
            <person name="Medrano-Soto A."/>
            <person name="Moreno-Hagelsieb G."/>
            <person name="Janga S.C."/>
            <person name="Ramirez M.A."/>
            <person name="Jimenez-Jacinto V."/>
            <person name="Collado-Vides J."/>
            <person name="Davila G."/>
        </authorList>
    </citation>
    <scope>NUCLEOTIDE SEQUENCE [LARGE SCALE GENOMIC DNA]</scope>
    <source>
        <strain>ATCC 51251 / DSM 11541 / JCM 21823 / NBRC 15573 / CFN 42</strain>
    </source>
</reference>
<keyword id="KW-0067">ATP-binding</keyword>
<keyword id="KW-0315">Glutamine amidotransferase</keyword>
<keyword id="KW-0436">Ligase</keyword>
<keyword id="KW-0460">Magnesium</keyword>
<keyword id="KW-0479">Metal-binding</keyword>
<keyword id="KW-0547">Nucleotide-binding</keyword>
<keyword id="KW-0665">Pyrimidine biosynthesis</keyword>
<keyword id="KW-1185">Reference proteome</keyword>
<protein>
    <recommendedName>
        <fullName evidence="1">CTP synthase</fullName>
        <ecNumber evidence="1">6.3.4.2</ecNumber>
    </recommendedName>
    <alternativeName>
        <fullName evidence="1">Cytidine 5'-triphosphate synthase</fullName>
    </alternativeName>
    <alternativeName>
        <fullName evidence="1">Cytidine triphosphate synthetase</fullName>
        <shortName evidence="1">CTP synthetase</shortName>
        <shortName evidence="1">CTPS</shortName>
    </alternativeName>
    <alternativeName>
        <fullName evidence="1">UTP--ammonia ligase</fullName>
    </alternativeName>
</protein>
<dbReference type="EC" id="6.3.4.2" evidence="1"/>
<dbReference type="EMBL" id="CP000133">
    <property type="protein sequence ID" value="ABC90965.1"/>
    <property type="molecule type" value="Genomic_DNA"/>
</dbReference>
<dbReference type="RefSeq" id="WP_011425446.1">
    <property type="nucleotide sequence ID" value="NC_007761.1"/>
</dbReference>
<dbReference type="SMR" id="Q2K871"/>
<dbReference type="MEROPS" id="C26.964"/>
<dbReference type="KEGG" id="ret:RHE_CH02184"/>
<dbReference type="eggNOG" id="COG0504">
    <property type="taxonomic scope" value="Bacteria"/>
</dbReference>
<dbReference type="HOGENOM" id="CLU_011675_5_0_5"/>
<dbReference type="OrthoDB" id="9801107at2"/>
<dbReference type="UniPathway" id="UPA00159">
    <property type="reaction ID" value="UER00277"/>
</dbReference>
<dbReference type="Proteomes" id="UP000001936">
    <property type="component" value="Chromosome"/>
</dbReference>
<dbReference type="GO" id="GO:0005829">
    <property type="term" value="C:cytosol"/>
    <property type="evidence" value="ECO:0007669"/>
    <property type="project" value="TreeGrafter"/>
</dbReference>
<dbReference type="GO" id="GO:0005524">
    <property type="term" value="F:ATP binding"/>
    <property type="evidence" value="ECO:0007669"/>
    <property type="project" value="UniProtKB-KW"/>
</dbReference>
<dbReference type="GO" id="GO:0003883">
    <property type="term" value="F:CTP synthase activity"/>
    <property type="evidence" value="ECO:0007669"/>
    <property type="project" value="UniProtKB-UniRule"/>
</dbReference>
<dbReference type="GO" id="GO:0004359">
    <property type="term" value="F:glutaminase activity"/>
    <property type="evidence" value="ECO:0007669"/>
    <property type="project" value="RHEA"/>
</dbReference>
<dbReference type="GO" id="GO:0042802">
    <property type="term" value="F:identical protein binding"/>
    <property type="evidence" value="ECO:0007669"/>
    <property type="project" value="TreeGrafter"/>
</dbReference>
<dbReference type="GO" id="GO:0046872">
    <property type="term" value="F:metal ion binding"/>
    <property type="evidence" value="ECO:0007669"/>
    <property type="project" value="UniProtKB-KW"/>
</dbReference>
<dbReference type="GO" id="GO:0044210">
    <property type="term" value="P:'de novo' CTP biosynthetic process"/>
    <property type="evidence" value="ECO:0007669"/>
    <property type="project" value="UniProtKB-UniRule"/>
</dbReference>
<dbReference type="GO" id="GO:0019856">
    <property type="term" value="P:pyrimidine nucleobase biosynthetic process"/>
    <property type="evidence" value="ECO:0007669"/>
    <property type="project" value="TreeGrafter"/>
</dbReference>
<dbReference type="CDD" id="cd03113">
    <property type="entry name" value="CTPS_N"/>
    <property type="match status" value="1"/>
</dbReference>
<dbReference type="CDD" id="cd01746">
    <property type="entry name" value="GATase1_CTP_Synthase"/>
    <property type="match status" value="1"/>
</dbReference>
<dbReference type="FunFam" id="3.40.50.300:FF:000009">
    <property type="entry name" value="CTP synthase"/>
    <property type="match status" value="1"/>
</dbReference>
<dbReference type="FunFam" id="3.40.50.880:FF:000002">
    <property type="entry name" value="CTP synthase"/>
    <property type="match status" value="1"/>
</dbReference>
<dbReference type="Gene3D" id="3.40.50.880">
    <property type="match status" value="1"/>
</dbReference>
<dbReference type="Gene3D" id="3.40.50.300">
    <property type="entry name" value="P-loop containing nucleotide triphosphate hydrolases"/>
    <property type="match status" value="1"/>
</dbReference>
<dbReference type="HAMAP" id="MF_01227">
    <property type="entry name" value="PyrG"/>
    <property type="match status" value="1"/>
</dbReference>
<dbReference type="InterPro" id="IPR029062">
    <property type="entry name" value="Class_I_gatase-like"/>
</dbReference>
<dbReference type="InterPro" id="IPR004468">
    <property type="entry name" value="CTP_synthase"/>
</dbReference>
<dbReference type="InterPro" id="IPR017456">
    <property type="entry name" value="CTP_synthase_N"/>
</dbReference>
<dbReference type="InterPro" id="IPR017926">
    <property type="entry name" value="GATASE"/>
</dbReference>
<dbReference type="InterPro" id="IPR033828">
    <property type="entry name" value="GATase1_CTP_Synthase"/>
</dbReference>
<dbReference type="InterPro" id="IPR027417">
    <property type="entry name" value="P-loop_NTPase"/>
</dbReference>
<dbReference type="NCBIfam" id="NF003792">
    <property type="entry name" value="PRK05380.1"/>
    <property type="match status" value="1"/>
</dbReference>
<dbReference type="NCBIfam" id="TIGR00337">
    <property type="entry name" value="PyrG"/>
    <property type="match status" value="1"/>
</dbReference>
<dbReference type="PANTHER" id="PTHR11550">
    <property type="entry name" value="CTP SYNTHASE"/>
    <property type="match status" value="1"/>
</dbReference>
<dbReference type="PANTHER" id="PTHR11550:SF0">
    <property type="entry name" value="CTP SYNTHASE-RELATED"/>
    <property type="match status" value="1"/>
</dbReference>
<dbReference type="Pfam" id="PF06418">
    <property type="entry name" value="CTP_synth_N"/>
    <property type="match status" value="1"/>
</dbReference>
<dbReference type="Pfam" id="PF00117">
    <property type="entry name" value="GATase"/>
    <property type="match status" value="1"/>
</dbReference>
<dbReference type="SUPFAM" id="SSF52317">
    <property type="entry name" value="Class I glutamine amidotransferase-like"/>
    <property type="match status" value="1"/>
</dbReference>
<dbReference type="SUPFAM" id="SSF52540">
    <property type="entry name" value="P-loop containing nucleoside triphosphate hydrolases"/>
    <property type="match status" value="1"/>
</dbReference>
<dbReference type="PROSITE" id="PS51273">
    <property type="entry name" value="GATASE_TYPE_1"/>
    <property type="match status" value="1"/>
</dbReference>
<name>PYRG_RHIEC</name>
<organism>
    <name type="scientific">Rhizobium etli (strain ATCC 51251 / DSM 11541 / JCM 21823 / NBRC 15573 / CFN 42)</name>
    <dbReference type="NCBI Taxonomy" id="347834"/>
    <lineage>
        <taxon>Bacteria</taxon>
        <taxon>Pseudomonadati</taxon>
        <taxon>Pseudomonadota</taxon>
        <taxon>Alphaproteobacteria</taxon>
        <taxon>Hyphomicrobiales</taxon>
        <taxon>Rhizobiaceae</taxon>
        <taxon>Rhizobium/Agrobacterium group</taxon>
        <taxon>Rhizobium</taxon>
    </lineage>
</organism>
<evidence type="ECO:0000255" key="1">
    <source>
        <dbReference type="HAMAP-Rule" id="MF_01227"/>
    </source>
</evidence>
<accession>Q2K871</accession>
<gene>
    <name evidence="1" type="primary">pyrG</name>
    <name type="ordered locus">RHE_CH02184</name>
</gene>
<sequence>MARYVFITGGVVSSLGKGIAAAALGALLQARGYRVRLRKLDPYLNVDPGTMSPTQHGEVFVTDDGAETDLDLGHYERFTGRSATRTDNITTGRIYKNIIDKERRGDYLGATVQVIPHVTNEIKDFVTEGNQDYDFVICEIGGTVGDIEAMPFMEAIRQLGNDLPRGTAVYVHLTLMPYIPAAGELKTKPTQHSVKELQALGIHPDILLVRADREIPEAERRKLSLFCNVRPSAVIQALDVANIYDVPMAYHKEGLDDEVLAAFGIEPAPKPRLDQWEEVCNRIRTPEGEVTIAIVGKYTGLKDAYKSLIEALHHGGIANRVKVKLEWIESEVFEKEDPAPYLEKVHGILVPGGFGERGSEGKIHAARFARERKVPYFGICFGMQMAVIEAARNLADVPDASSTEFGPAKEPVVGLMTEWVKGNELQKRTAAGDLGGTMRLGAYKAALKKGTKISDIYGSTDISERHRHRYEVNIDYKDRLESCGLVFSGMSPDGVLPETIEYPDHPWFIGVQYHPELKSRPLDPHPLFASFIEAATEQSRLV</sequence>
<comment type="function">
    <text evidence="1">Catalyzes the ATP-dependent amination of UTP to CTP with either L-glutamine or ammonia as the source of nitrogen. Regulates intracellular CTP levels through interactions with the four ribonucleotide triphosphates.</text>
</comment>
<comment type="catalytic activity">
    <reaction evidence="1">
        <text>UTP + L-glutamine + ATP + H2O = CTP + L-glutamate + ADP + phosphate + 2 H(+)</text>
        <dbReference type="Rhea" id="RHEA:26426"/>
        <dbReference type="ChEBI" id="CHEBI:15377"/>
        <dbReference type="ChEBI" id="CHEBI:15378"/>
        <dbReference type="ChEBI" id="CHEBI:29985"/>
        <dbReference type="ChEBI" id="CHEBI:30616"/>
        <dbReference type="ChEBI" id="CHEBI:37563"/>
        <dbReference type="ChEBI" id="CHEBI:43474"/>
        <dbReference type="ChEBI" id="CHEBI:46398"/>
        <dbReference type="ChEBI" id="CHEBI:58359"/>
        <dbReference type="ChEBI" id="CHEBI:456216"/>
        <dbReference type="EC" id="6.3.4.2"/>
    </reaction>
</comment>
<comment type="catalytic activity">
    <reaction evidence="1">
        <text>L-glutamine + H2O = L-glutamate + NH4(+)</text>
        <dbReference type="Rhea" id="RHEA:15889"/>
        <dbReference type="ChEBI" id="CHEBI:15377"/>
        <dbReference type="ChEBI" id="CHEBI:28938"/>
        <dbReference type="ChEBI" id="CHEBI:29985"/>
        <dbReference type="ChEBI" id="CHEBI:58359"/>
    </reaction>
</comment>
<comment type="catalytic activity">
    <reaction evidence="1">
        <text>UTP + NH4(+) + ATP = CTP + ADP + phosphate + 2 H(+)</text>
        <dbReference type="Rhea" id="RHEA:16597"/>
        <dbReference type="ChEBI" id="CHEBI:15378"/>
        <dbReference type="ChEBI" id="CHEBI:28938"/>
        <dbReference type="ChEBI" id="CHEBI:30616"/>
        <dbReference type="ChEBI" id="CHEBI:37563"/>
        <dbReference type="ChEBI" id="CHEBI:43474"/>
        <dbReference type="ChEBI" id="CHEBI:46398"/>
        <dbReference type="ChEBI" id="CHEBI:456216"/>
    </reaction>
</comment>
<comment type="activity regulation">
    <text evidence="1">Allosterically activated by GTP, when glutamine is the substrate; GTP has no effect on the reaction when ammonia is the substrate. The allosteric effector GTP functions by stabilizing the protein conformation that binds the tetrahedral intermediate(s) formed during glutamine hydrolysis. Inhibited by the product CTP, via allosteric rather than competitive inhibition.</text>
</comment>
<comment type="pathway">
    <text evidence="1">Pyrimidine metabolism; CTP biosynthesis via de novo pathway; CTP from UDP: step 2/2.</text>
</comment>
<comment type="subunit">
    <text evidence="1">Homotetramer.</text>
</comment>
<comment type="miscellaneous">
    <text evidence="1">CTPSs have evolved a hybrid strategy for distinguishing between UTP and CTP. The overlapping regions of the product feedback inhibitory and substrate sites recognize a common feature in both compounds, the triphosphate moiety. To differentiate isosteric substrate and product pyrimidine rings, an additional pocket far from the expected kinase/ligase catalytic site, specifically recognizes the cytosine and ribose portions of the product inhibitor.</text>
</comment>
<comment type="similarity">
    <text evidence="1">Belongs to the CTP synthase family.</text>
</comment>